<gene>
    <name evidence="8" type="primary">nimX</name>
    <name evidence="8" type="synonym">cdc2</name>
    <name type="synonym">cdk1</name>
    <name type="ORF">AN4182</name>
</gene>
<name>CDK1_EMENI</name>
<sequence>MENYQKIEKIGEGTYGVVYKARELTHPNRIVALKKIRLEAEDEGVPSTAIREISLLKEMNDPNIVRLLNIVHADGHKLYLVFEFLDLDLKKYMEALPVSEGGRGRALPDGSTLSRNLGLGDAMVKKFMAQLIEGIRFCHSHRVLHRDLKPQNLLIDRDGNLKLADFGLARAFGVPLRTYTHEVVTLWYRSPEILLGGRQYSTGVDMWSCGAIFAEMCTRKPLFPGDSEIDEIFKIFRILGTPDETIWPGVTSFPDFKPTFPKWKREDIQNVVPGLEEDGLDLLEALLEYDPARRISAKQACMHPYFQHGSSYYSGRARRNGFH</sequence>
<feature type="chain" id="PRO_0000085719" description="Cyclin-dependent kinase 1">
    <location>
        <begin position="1"/>
        <end position="323"/>
    </location>
</feature>
<feature type="domain" description="Protein kinase" evidence="6">
    <location>
        <begin position="4"/>
        <end position="306"/>
    </location>
</feature>
<feature type="active site" description="Proton acceptor" evidence="6 7">
    <location>
        <position position="147"/>
    </location>
</feature>
<feature type="binding site" evidence="6">
    <location>
        <begin position="10"/>
        <end position="18"/>
    </location>
    <ligand>
        <name>ATP</name>
        <dbReference type="ChEBI" id="CHEBI:30616"/>
    </ligand>
</feature>
<feature type="binding site" evidence="6">
    <location>
        <position position="34"/>
    </location>
    <ligand>
        <name>ATP</name>
        <dbReference type="ChEBI" id="CHEBI:30616"/>
    </ligand>
</feature>
<feature type="modified residue" description="Phosphothreonine" evidence="1">
    <location>
        <position position="14"/>
    </location>
</feature>
<feature type="modified residue" description="Phosphotyrosine" evidence="1">
    <location>
        <position position="15"/>
    </location>
</feature>
<feature type="modified residue" description="Phosphothreonine; by CAK" evidence="1">
    <location>
        <position position="180"/>
    </location>
</feature>
<keyword id="KW-0067">ATP-binding</keyword>
<keyword id="KW-0131">Cell cycle</keyword>
<keyword id="KW-0132">Cell division</keyword>
<keyword id="KW-0418">Kinase</keyword>
<keyword id="KW-0498">Mitosis</keyword>
<keyword id="KW-0547">Nucleotide-binding</keyword>
<keyword id="KW-0597">Phosphoprotein</keyword>
<keyword id="KW-1185">Reference proteome</keyword>
<keyword id="KW-0723">Serine/threonine-protein kinase</keyword>
<keyword id="KW-0808">Transferase</keyword>
<protein>
    <recommendedName>
        <fullName evidence="2">Cyclin-dependent kinase 1</fullName>
        <shortName evidence="2">CDK1</shortName>
        <ecNumber evidence="3">2.7.11.22</ecNumber>
    </recommendedName>
    <alternativeName>
        <fullName>Cell division control protein 2</fullName>
    </alternativeName>
    <alternativeName>
        <fullName>Cell division protein kinase 1</fullName>
    </alternativeName>
    <alternativeName>
        <fullName>Never in mitosis protein X</fullName>
    </alternativeName>
</protein>
<comment type="function">
    <text evidence="3">Cyclin-dependent kinase that acts as a master regulator of the mitotic and meiotic cell cycles.</text>
</comment>
<comment type="catalytic activity">
    <reaction evidence="5">
        <text>L-seryl-[protein] + ATP = O-phospho-L-seryl-[protein] + ADP + H(+)</text>
        <dbReference type="Rhea" id="RHEA:17989"/>
        <dbReference type="Rhea" id="RHEA-COMP:9863"/>
        <dbReference type="Rhea" id="RHEA-COMP:11604"/>
        <dbReference type="ChEBI" id="CHEBI:15378"/>
        <dbReference type="ChEBI" id="CHEBI:29999"/>
        <dbReference type="ChEBI" id="CHEBI:30616"/>
        <dbReference type="ChEBI" id="CHEBI:83421"/>
        <dbReference type="ChEBI" id="CHEBI:456216"/>
        <dbReference type="EC" id="2.7.11.22"/>
    </reaction>
</comment>
<comment type="catalytic activity">
    <reaction evidence="3">
        <text>L-threonyl-[protein] + ATP = O-phospho-L-threonyl-[protein] + ADP + H(+)</text>
        <dbReference type="Rhea" id="RHEA:46608"/>
        <dbReference type="Rhea" id="RHEA-COMP:11060"/>
        <dbReference type="Rhea" id="RHEA-COMP:11605"/>
        <dbReference type="ChEBI" id="CHEBI:15378"/>
        <dbReference type="ChEBI" id="CHEBI:30013"/>
        <dbReference type="ChEBI" id="CHEBI:30616"/>
        <dbReference type="ChEBI" id="CHEBI:61977"/>
        <dbReference type="ChEBI" id="CHEBI:456216"/>
        <dbReference type="EC" id="2.7.11.22"/>
    </reaction>
</comment>
<comment type="activity regulation">
    <text evidence="4">Phosphorylation at Thr-14 or Tyr-15 inactivates the enzyme, while phosphorylation at Thr-180 activates it.</text>
</comment>
<comment type="subunit">
    <text evidence="3">Forms a stable but non-covalent complex with a regulatory subunit (SUC1) and with a cyclin.</text>
</comment>
<comment type="similarity">
    <text evidence="9">Belongs to the protein kinase superfamily. CMGC Ser/Thr protein kinase family. CDC2/CDKX subfamily.</text>
</comment>
<evidence type="ECO:0000250" key="1"/>
<evidence type="ECO:0000250" key="2">
    <source>
        <dbReference type="UniProtKB" id="P00546"/>
    </source>
</evidence>
<evidence type="ECO:0000250" key="3">
    <source>
        <dbReference type="UniProtKB" id="P04551"/>
    </source>
</evidence>
<evidence type="ECO:0000250" key="4">
    <source>
        <dbReference type="UniProtKB" id="P06493"/>
    </source>
</evidence>
<evidence type="ECO:0000250" key="5">
    <source>
        <dbReference type="UniProtKB" id="P24941"/>
    </source>
</evidence>
<evidence type="ECO:0000255" key="6">
    <source>
        <dbReference type="PROSITE-ProRule" id="PRU00159"/>
    </source>
</evidence>
<evidence type="ECO:0000255" key="7">
    <source>
        <dbReference type="PROSITE-ProRule" id="PRU10027"/>
    </source>
</evidence>
<evidence type="ECO:0000303" key="8">
    <source>
    </source>
</evidence>
<evidence type="ECO:0000305" key="9"/>
<proteinExistence type="evidence at transcript level"/>
<accession>Q00646</accession>
<accession>C8V4M9</accession>
<accession>Q5B5J8</accession>
<organism>
    <name type="scientific">Emericella nidulans (strain FGSC A4 / ATCC 38163 / CBS 112.46 / NRRL 194 / M139)</name>
    <name type="common">Aspergillus nidulans</name>
    <dbReference type="NCBI Taxonomy" id="227321"/>
    <lineage>
        <taxon>Eukaryota</taxon>
        <taxon>Fungi</taxon>
        <taxon>Dikarya</taxon>
        <taxon>Ascomycota</taxon>
        <taxon>Pezizomycotina</taxon>
        <taxon>Eurotiomycetes</taxon>
        <taxon>Eurotiomycetidae</taxon>
        <taxon>Eurotiales</taxon>
        <taxon>Aspergillaceae</taxon>
        <taxon>Aspergillus</taxon>
        <taxon>Aspergillus subgen. Nidulantes</taxon>
    </lineage>
</organism>
<reference key="1">
    <citation type="journal article" date="1994" name="J. Cell Sci.">
        <title>A single p34cdc2 protein kinase (encoded by nimXcdc2) is required at G1 and G2 in Aspergillus nidulans.</title>
        <authorList>
            <person name="Osmani A.H."/>
            <person name="van Peij N."/>
            <person name="Mischke M."/>
            <person name="O'Connell M.J."/>
            <person name="Osmani S.A."/>
        </authorList>
    </citation>
    <scope>NUCLEOTIDE SEQUENCE [MRNA]</scope>
    <source>
        <tissue>Mycelium</tissue>
    </source>
</reference>
<reference key="2">
    <citation type="journal article" date="2005" name="Nature">
        <title>Sequencing of Aspergillus nidulans and comparative analysis with A. fumigatus and A. oryzae.</title>
        <authorList>
            <person name="Galagan J.E."/>
            <person name="Calvo S.E."/>
            <person name="Cuomo C."/>
            <person name="Ma L.-J."/>
            <person name="Wortman J.R."/>
            <person name="Batzoglou S."/>
            <person name="Lee S.-I."/>
            <person name="Bastuerkmen M."/>
            <person name="Spevak C.C."/>
            <person name="Clutterbuck J."/>
            <person name="Kapitonov V."/>
            <person name="Jurka J."/>
            <person name="Scazzocchio C."/>
            <person name="Farman M.L."/>
            <person name="Butler J."/>
            <person name="Purcell S."/>
            <person name="Harris S."/>
            <person name="Braus G.H."/>
            <person name="Draht O."/>
            <person name="Busch S."/>
            <person name="D'Enfert C."/>
            <person name="Bouchier C."/>
            <person name="Goldman G.H."/>
            <person name="Bell-Pedersen D."/>
            <person name="Griffiths-Jones S."/>
            <person name="Doonan J.H."/>
            <person name="Yu J."/>
            <person name="Vienken K."/>
            <person name="Pain A."/>
            <person name="Freitag M."/>
            <person name="Selker E.U."/>
            <person name="Archer D.B."/>
            <person name="Penalva M.A."/>
            <person name="Oakley B.R."/>
            <person name="Momany M."/>
            <person name="Tanaka T."/>
            <person name="Kumagai T."/>
            <person name="Asai K."/>
            <person name="Machida M."/>
            <person name="Nierman W.C."/>
            <person name="Denning D.W."/>
            <person name="Caddick M.X."/>
            <person name="Hynes M."/>
            <person name="Paoletti M."/>
            <person name="Fischer R."/>
            <person name="Miller B.L."/>
            <person name="Dyer P.S."/>
            <person name="Sachs M.S."/>
            <person name="Osmani S.A."/>
            <person name="Birren B.W."/>
        </authorList>
    </citation>
    <scope>NUCLEOTIDE SEQUENCE [LARGE SCALE GENOMIC DNA]</scope>
    <source>
        <strain>FGSC A4 / ATCC 38163 / CBS 112.46 / NRRL 194 / M139</strain>
    </source>
</reference>
<reference key="3">
    <citation type="journal article" date="2009" name="Fungal Genet. Biol.">
        <title>The 2008 update of the Aspergillus nidulans genome annotation: a community effort.</title>
        <authorList>
            <person name="Wortman J.R."/>
            <person name="Gilsenan J.M."/>
            <person name="Joardar V."/>
            <person name="Deegan J."/>
            <person name="Clutterbuck J."/>
            <person name="Andersen M.R."/>
            <person name="Archer D."/>
            <person name="Bencina M."/>
            <person name="Braus G."/>
            <person name="Coutinho P."/>
            <person name="von Dohren H."/>
            <person name="Doonan J."/>
            <person name="Driessen A.J."/>
            <person name="Durek P."/>
            <person name="Espeso E."/>
            <person name="Fekete E."/>
            <person name="Flipphi M."/>
            <person name="Estrada C.G."/>
            <person name="Geysens S."/>
            <person name="Goldman G."/>
            <person name="de Groot P.W."/>
            <person name="Hansen K."/>
            <person name="Harris S.D."/>
            <person name="Heinekamp T."/>
            <person name="Helmstaedt K."/>
            <person name="Henrissat B."/>
            <person name="Hofmann G."/>
            <person name="Homan T."/>
            <person name="Horio T."/>
            <person name="Horiuchi H."/>
            <person name="James S."/>
            <person name="Jones M."/>
            <person name="Karaffa L."/>
            <person name="Karanyi Z."/>
            <person name="Kato M."/>
            <person name="Keller N."/>
            <person name="Kelly D.E."/>
            <person name="Kiel J.A."/>
            <person name="Kim J.M."/>
            <person name="van der Klei I.J."/>
            <person name="Klis F.M."/>
            <person name="Kovalchuk A."/>
            <person name="Krasevec N."/>
            <person name="Kubicek C.P."/>
            <person name="Liu B."/>
            <person name="Maccabe A."/>
            <person name="Meyer V."/>
            <person name="Mirabito P."/>
            <person name="Miskei M."/>
            <person name="Mos M."/>
            <person name="Mullins J."/>
            <person name="Nelson D.R."/>
            <person name="Nielsen J."/>
            <person name="Oakley B.R."/>
            <person name="Osmani S.A."/>
            <person name="Pakula T."/>
            <person name="Paszewski A."/>
            <person name="Paulsen I."/>
            <person name="Pilsyk S."/>
            <person name="Pocsi I."/>
            <person name="Punt P.J."/>
            <person name="Ram A.F."/>
            <person name="Ren Q."/>
            <person name="Robellet X."/>
            <person name="Robson G."/>
            <person name="Seiboth B."/>
            <person name="van Solingen P."/>
            <person name="Specht T."/>
            <person name="Sun J."/>
            <person name="Taheri-Talesh N."/>
            <person name="Takeshita N."/>
            <person name="Ussery D."/>
            <person name="vanKuyk P.A."/>
            <person name="Visser H."/>
            <person name="van de Vondervoort P.J."/>
            <person name="de Vries R.P."/>
            <person name="Walton J."/>
            <person name="Xiang X."/>
            <person name="Xiong Y."/>
            <person name="Zeng A.P."/>
            <person name="Brandt B.W."/>
            <person name="Cornell M.J."/>
            <person name="van den Hondel C.A."/>
            <person name="Visser J."/>
            <person name="Oliver S.G."/>
            <person name="Turner G."/>
        </authorList>
    </citation>
    <scope>GENOME REANNOTATION</scope>
    <source>
        <strain>FGSC A4 / ATCC 38163 / CBS 112.46 / NRRL 194 / M139</strain>
    </source>
</reference>
<dbReference type="EC" id="2.7.11.22" evidence="3"/>
<dbReference type="EMBL" id="U07169">
    <property type="protein sequence ID" value="AAA20597.1"/>
    <property type="molecule type" value="mRNA"/>
</dbReference>
<dbReference type="EMBL" id="AACD01000068">
    <property type="protein sequence ID" value="EAA59281.1"/>
    <property type="molecule type" value="Genomic_DNA"/>
</dbReference>
<dbReference type="EMBL" id="BN001302">
    <property type="protein sequence ID" value="CBF74540.1"/>
    <property type="molecule type" value="Genomic_DNA"/>
</dbReference>
<dbReference type="RefSeq" id="XP_661786.1">
    <property type="nucleotide sequence ID" value="XM_656694.2"/>
</dbReference>
<dbReference type="SMR" id="Q00646"/>
<dbReference type="FunCoup" id="Q00646">
    <property type="interactions" value="883"/>
</dbReference>
<dbReference type="MINT" id="Q00646"/>
<dbReference type="STRING" id="227321.Q00646"/>
<dbReference type="EnsemblFungi" id="CBF74540">
    <property type="protein sequence ID" value="CBF74540"/>
    <property type="gene ID" value="ANIA_04182"/>
</dbReference>
<dbReference type="GeneID" id="2873604"/>
<dbReference type="KEGG" id="ani:ANIA_04182"/>
<dbReference type="VEuPathDB" id="FungiDB:AN4182"/>
<dbReference type="eggNOG" id="KOG0594">
    <property type="taxonomic scope" value="Eukaryota"/>
</dbReference>
<dbReference type="HOGENOM" id="CLU_000288_181_6_1"/>
<dbReference type="InParanoid" id="Q00646"/>
<dbReference type="OMA" id="YLYQITR"/>
<dbReference type="OrthoDB" id="1732493at2759"/>
<dbReference type="BRENDA" id="2.7.11.22">
    <property type="organism ID" value="517"/>
</dbReference>
<dbReference type="Proteomes" id="UP000000560">
    <property type="component" value="Chromosome II"/>
</dbReference>
<dbReference type="GO" id="GO:0000307">
    <property type="term" value="C:cyclin-dependent protein kinase holoenzyme complex"/>
    <property type="evidence" value="ECO:0000318"/>
    <property type="project" value="GO_Central"/>
</dbReference>
<dbReference type="GO" id="GO:0005737">
    <property type="term" value="C:cytoplasm"/>
    <property type="evidence" value="ECO:0000318"/>
    <property type="project" value="GO_Central"/>
</dbReference>
<dbReference type="GO" id="GO:0005634">
    <property type="term" value="C:nucleus"/>
    <property type="evidence" value="ECO:0000314"/>
    <property type="project" value="AspGD"/>
</dbReference>
<dbReference type="GO" id="GO:0005816">
    <property type="term" value="C:spindle pole body"/>
    <property type="evidence" value="ECO:0000314"/>
    <property type="project" value="AspGD"/>
</dbReference>
<dbReference type="GO" id="GO:0005524">
    <property type="term" value="F:ATP binding"/>
    <property type="evidence" value="ECO:0007669"/>
    <property type="project" value="UniProtKB-KW"/>
</dbReference>
<dbReference type="GO" id="GO:0030332">
    <property type="term" value="F:cyclin binding"/>
    <property type="evidence" value="ECO:0000318"/>
    <property type="project" value="GO_Central"/>
</dbReference>
<dbReference type="GO" id="GO:0004693">
    <property type="term" value="F:cyclin-dependent protein serine/threonine kinase activity"/>
    <property type="evidence" value="ECO:0000314"/>
    <property type="project" value="AspGD"/>
</dbReference>
<dbReference type="GO" id="GO:0106310">
    <property type="term" value="F:protein serine kinase activity"/>
    <property type="evidence" value="ECO:0007669"/>
    <property type="project" value="RHEA"/>
</dbReference>
<dbReference type="GO" id="GO:0051301">
    <property type="term" value="P:cell division"/>
    <property type="evidence" value="ECO:0007669"/>
    <property type="project" value="UniProtKB-KW"/>
</dbReference>
<dbReference type="GO" id="GO:0000082">
    <property type="term" value="P:G1/S transition of mitotic cell cycle"/>
    <property type="evidence" value="ECO:0000318"/>
    <property type="project" value="GO_Central"/>
</dbReference>
<dbReference type="GO" id="GO:1901992">
    <property type="term" value="P:positive regulation of mitotic cell cycle phase transition"/>
    <property type="evidence" value="ECO:0000315"/>
    <property type="project" value="UniProtKB"/>
</dbReference>
<dbReference type="GO" id="GO:0010389">
    <property type="term" value="P:regulation of G2/M transition of mitotic cell cycle"/>
    <property type="evidence" value="ECO:0000318"/>
    <property type="project" value="GO_Central"/>
</dbReference>
<dbReference type="GO" id="GO:0010468">
    <property type="term" value="P:regulation of gene expression"/>
    <property type="evidence" value="ECO:0000318"/>
    <property type="project" value="GO_Central"/>
</dbReference>
<dbReference type="GO" id="GO:0007165">
    <property type="term" value="P:signal transduction"/>
    <property type="evidence" value="ECO:0000318"/>
    <property type="project" value="GO_Central"/>
</dbReference>
<dbReference type="CDD" id="cd07835">
    <property type="entry name" value="STKc_CDK1_CdkB_like"/>
    <property type="match status" value="1"/>
</dbReference>
<dbReference type="FunFam" id="1.10.510.10:FF:000144">
    <property type="entry name" value="Cyclin-dependent kinase 2"/>
    <property type="match status" value="1"/>
</dbReference>
<dbReference type="FunFam" id="3.30.200.20:FF:000027">
    <property type="entry name" value="Putative Cyclin-dependent kinase 1"/>
    <property type="match status" value="1"/>
</dbReference>
<dbReference type="Gene3D" id="3.30.200.20">
    <property type="entry name" value="Phosphorylase Kinase, domain 1"/>
    <property type="match status" value="1"/>
</dbReference>
<dbReference type="Gene3D" id="1.10.510.10">
    <property type="entry name" value="Transferase(Phosphotransferase) domain 1"/>
    <property type="match status" value="1"/>
</dbReference>
<dbReference type="InterPro" id="IPR050108">
    <property type="entry name" value="CDK"/>
</dbReference>
<dbReference type="InterPro" id="IPR011009">
    <property type="entry name" value="Kinase-like_dom_sf"/>
</dbReference>
<dbReference type="InterPro" id="IPR000719">
    <property type="entry name" value="Prot_kinase_dom"/>
</dbReference>
<dbReference type="InterPro" id="IPR017441">
    <property type="entry name" value="Protein_kinase_ATP_BS"/>
</dbReference>
<dbReference type="InterPro" id="IPR008271">
    <property type="entry name" value="Ser/Thr_kinase_AS"/>
</dbReference>
<dbReference type="PANTHER" id="PTHR24056">
    <property type="entry name" value="CELL DIVISION PROTEIN KINASE"/>
    <property type="match status" value="1"/>
</dbReference>
<dbReference type="PANTHER" id="PTHR24056:SF254">
    <property type="entry name" value="CYCLIN-DEPENDENT KINASE 2"/>
    <property type="match status" value="1"/>
</dbReference>
<dbReference type="Pfam" id="PF00069">
    <property type="entry name" value="Pkinase"/>
    <property type="match status" value="1"/>
</dbReference>
<dbReference type="SMART" id="SM00220">
    <property type="entry name" value="S_TKc"/>
    <property type="match status" value="1"/>
</dbReference>
<dbReference type="SUPFAM" id="SSF56112">
    <property type="entry name" value="Protein kinase-like (PK-like)"/>
    <property type="match status" value="1"/>
</dbReference>
<dbReference type="PROSITE" id="PS00107">
    <property type="entry name" value="PROTEIN_KINASE_ATP"/>
    <property type="match status" value="1"/>
</dbReference>
<dbReference type="PROSITE" id="PS50011">
    <property type="entry name" value="PROTEIN_KINASE_DOM"/>
    <property type="match status" value="1"/>
</dbReference>
<dbReference type="PROSITE" id="PS00108">
    <property type="entry name" value="PROTEIN_KINASE_ST"/>
    <property type="match status" value="1"/>
</dbReference>